<feature type="chain" id="PRO_0000390723" description="DNA-binding protein inhibitor ID-2">
    <location>
        <begin position="1"/>
        <end position="132"/>
    </location>
</feature>
<feature type="domain" description="bHLH" evidence="4">
    <location>
        <begin position="23"/>
        <end position="75"/>
    </location>
</feature>
<feature type="short sequence motif" description="Nuclear export signal" evidence="1">
    <location>
        <begin position="105"/>
        <end position="114"/>
    </location>
</feature>
<dbReference type="EMBL" id="AC151469">
    <property type="protein sequence ID" value="AAY99629.1"/>
    <property type="molecule type" value="Genomic_DNA"/>
</dbReference>
<dbReference type="EMBL" id="CR855815">
    <property type="protein sequence ID" value="CAJ83121.1"/>
    <property type="molecule type" value="mRNA"/>
</dbReference>
<dbReference type="EMBL" id="BC059758">
    <property type="protein sequence ID" value="AAH59758.1"/>
    <property type="molecule type" value="mRNA"/>
</dbReference>
<dbReference type="RefSeq" id="NP_988885.1">
    <property type="nucleotide sequence ID" value="NM_203554.1"/>
</dbReference>
<dbReference type="SMR" id="Q6PBD7"/>
<dbReference type="FunCoup" id="Q6PBD7">
    <property type="interactions" value="1854"/>
</dbReference>
<dbReference type="STRING" id="8364.ENSXETP00000017654"/>
<dbReference type="DNASU" id="394480"/>
<dbReference type="GeneID" id="394480"/>
<dbReference type="KEGG" id="xtr:394480"/>
<dbReference type="AGR" id="Xenbase:XB-GENE-481297"/>
<dbReference type="CTD" id="3398"/>
<dbReference type="Xenbase" id="XB-GENE-481297">
    <property type="gene designation" value="id2"/>
</dbReference>
<dbReference type="InParanoid" id="Q6PBD7"/>
<dbReference type="OMA" id="FPTELMT"/>
<dbReference type="OrthoDB" id="10047910at2759"/>
<dbReference type="Proteomes" id="UP000008143">
    <property type="component" value="Chromosome 5"/>
</dbReference>
<dbReference type="Bgee" id="ENSXETG00000040416">
    <property type="expression patterns" value="Expressed in 2-cell stage embryo and 19 other cell types or tissues"/>
</dbReference>
<dbReference type="GO" id="GO:0005737">
    <property type="term" value="C:cytoplasm"/>
    <property type="evidence" value="ECO:0007669"/>
    <property type="project" value="UniProtKB-SubCell"/>
</dbReference>
<dbReference type="GO" id="GO:0005634">
    <property type="term" value="C:nucleus"/>
    <property type="evidence" value="ECO:0000250"/>
    <property type="project" value="UniProtKB"/>
</dbReference>
<dbReference type="GO" id="GO:0032991">
    <property type="term" value="C:protein-containing complex"/>
    <property type="evidence" value="ECO:0000250"/>
    <property type="project" value="UniProtKB"/>
</dbReference>
<dbReference type="GO" id="GO:0043425">
    <property type="term" value="F:bHLH transcription factor binding"/>
    <property type="evidence" value="ECO:0000250"/>
    <property type="project" value="UniProtKB"/>
</dbReference>
<dbReference type="GO" id="GO:0046983">
    <property type="term" value="F:protein dimerization activity"/>
    <property type="evidence" value="ECO:0007669"/>
    <property type="project" value="InterPro"/>
</dbReference>
<dbReference type="GO" id="GO:0090398">
    <property type="term" value="P:cellular senescence"/>
    <property type="evidence" value="ECO:0000250"/>
    <property type="project" value="UniProtKB"/>
</dbReference>
<dbReference type="GO" id="GO:0048557">
    <property type="term" value="P:embryonic digestive tract morphogenesis"/>
    <property type="evidence" value="ECO:0000250"/>
    <property type="project" value="UniProtKB"/>
</dbReference>
<dbReference type="GO" id="GO:0061031">
    <property type="term" value="P:endodermal digestive tract morphogenesis"/>
    <property type="evidence" value="ECO:0000250"/>
    <property type="project" value="UniProtKB"/>
</dbReference>
<dbReference type="GO" id="GO:0010629">
    <property type="term" value="P:negative regulation of gene expression"/>
    <property type="evidence" value="ECO:0000250"/>
    <property type="project" value="UniProtKB"/>
</dbReference>
<dbReference type="GO" id="GO:0000122">
    <property type="term" value="P:negative regulation of transcription by RNA polymerase II"/>
    <property type="evidence" value="ECO:0000250"/>
    <property type="project" value="UniProtKB"/>
</dbReference>
<dbReference type="GO" id="GO:0048663">
    <property type="term" value="P:neuron fate commitment"/>
    <property type="evidence" value="ECO:0000250"/>
    <property type="project" value="UniProtKB"/>
</dbReference>
<dbReference type="GO" id="GO:0045777">
    <property type="term" value="P:positive regulation of blood pressure"/>
    <property type="evidence" value="ECO:0000250"/>
    <property type="project" value="UniProtKB"/>
</dbReference>
<dbReference type="GO" id="GO:0045893">
    <property type="term" value="P:positive regulation of DNA-templated transcription"/>
    <property type="evidence" value="ECO:0000250"/>
    <property type="project" value="UniProtKB"/>
</dbReference>
<dbReference type="GO" id="GO:0010628">
    <property type="term" value="P:positive regulation of gene expression"/>
    <property type="evidence" value="ECO:0000250"/>
    <property type="project" value="UniProtKB"/>
</dbReference>
<dbReference type="GO" id="GO:0048661">
    <property type="term" value="P:positive regulation of smooth muscle cell proliferation"/>
    <property type="evidence" value="ECO:0000250"/>
    <property type="project" value="UniProtKB"/>
</dbReference>
<dbReference type="GO" id="GO:0042752">
    <property type="term" value="P:regulation of circadian rhythm"/>
    <property type="evidence" value="ECO:0000250"/>
    <property type="project" value="UniProtKB"/>
</dbReference>
<dbReference type="GO" id="GO:0010468">
    <property type="term" value="P:regulation of gene expression"/>
    <property type="evidence" value="ECO:0000250"/>
    <property type="project" value="UniProtKB"/>
</dbReference>
<dbReference type="GO" id="GO:2000177">
    <property type="term" value="P:regulation of neural precursor cell proliferation"/>
    <property type="evidence" value="ECO:0000250"/>
    <property type="project" value="UniProtKB"/>
</dbReference>
<dbReference type="GO" id="GO:0045664">
    <property type="term" value="P:regulation of neuron differentiation"/>
    <property type="evidence" value="ECO:0000250"/>
    <property type="project" value="UniProtKB"/>
</dbReference>
<dbReference type="GO" id="GO:0048511">
    <property type="term" value="P:rhythmic process"/>
    <property type="evidence" value="ECO:0007669"/>
    <property type="project" value="UniProtKB-KW"/>
</dbReference>
<dbReference type="CDD" id="cd19692">
    <property type="entry name" value="bHLH_dnHLH_ID2"/>
    <property type="match status" value="1"/>
</dbReference>
<dbReference type="FunFam" id="4.10.280.10:FF:000055">
    <property type="entry name" value="DNA-binding protein inhibitor ID-2"/>
    <property type="match status" value="1"/>
</dbReference>
<dbReference type="Gene3D" id="4.10.280.10">
    <property type="entry name" value="Helix-loop-helix DNA-binding domain"/>
    <property type="match status" value="1"/>
</dbReference>
<dbReference type="InterPro" id="IPR011598">
    <property type="entry name" value="bHLH_dom"/>
</dbReference>
<dbReference type="InterPro" id="IPR026052">
    <property type="entry name" value="DNA-bd_prot-inh"/>
</dbReference>
<dbReference type="InterPro" id="IPR036638">
    <property type="entry name" value="HLH_DNA-bd_sf"/>
</dbReference>
<dbReference type="PANTHER" id="PTHR11723">
    <property type="entry name" value="DNA-BINDING PROTEIN INHIBITOR"/>
    <property type="match status" value="1"/>
</dbReference>
<dbReference type="PANTHER" id="PTHR11723:SF5">
    <property type="entry name" value="DNA-BINDING PROTEIN INHIBITOR ID-2"/>
    <property type="match status" value="1"/>
</dbReference>
<dbReference type="Pfam" id="PF00010">
    <property type="entry name" value="HLH"/>
    <property type="match status" value="1"/>
</dbReference>
<dbReference type="SMART" id="SM00353">
    <property type="entry name" value="HLH"/>
    <property type="match status" value="1"/>
</dbReference>
<dbReference type="SUPFAM" id="SSF47459">
    <property type="entry name" value="HLH, helix-loop-helix DNA-binding domain"/>
    <property type="match status" value="1"/>
</dbReference>
<dbReference type="PROSITE" id="PS50888">
    <property type="entry name" value="BHLH"/>
    <property type="match status" value="1"/>
</dbReference>
<organism>
    <name type="scientific">Xenopus tropicalis</name>
    <name type="common">Western clawed frog</name>
    <name type="synonym">Silurana tropicalis</name>
    <dbReference type="NCBI Taxonomy" id="8364"/>
    <lineage>
        <taxon>Eukaryota</taxon>
        <taxon>Metazoa</taxon>
        <taxon>Chordata</taxon>
        <taxon>Craniata</taxon>
        <taxon>Vertebrata</taxon>
        <taxon>Euteleostomi</taxon>
        <taxon>Amphibia</taxon>
        <taxon>Batrachia</taxon>
        <taxon>Anura</taxon>
        <taxon>Pipoidea</taxon>
        <taxon>Pipidae</taxon>
        <taxon>Xenopodinae</taxon>
        <taxon>Xenopus</taxon>
        <taxon>Silurana</taxon>
    </lineage>
</organism>
<sequence length="132" mass="14519">MKAFSPVRSVRKSSLTEHSLGIARSKTPVDDPMSLLYNMNDCYSKLKELVPSIPQNKKVSKMEILQHVIDYILDLQLALDSHPSIVSLHHARVGGSTSRTPLTALNTDISILSLQAAELSAEFTDESKSLCP</sequence>
<keyword id="KW-0090">Biological rhythms</keyword>
<keyword id="KW-0963">Cytoplasm</keyword>
<keyword id="KW-0217">Developmental protein</keyword>
<keyword id="KW-0539">Nucleus</keyword>
<keyword id="KW-1185">Reference proteome</keyword>
<keyword id="KW-0678">Repressor</keyword>
<keyword id="KW-0804">Transcription</keyword>
<keyword id="KW-0805">Transcription regulation</keyword>
<accession>Q6PBD7</accession>
<protein>
    <recommendedName>
        <fullName evidence="3">DNA-binding protein inhibitor ID-2</fullName>
    </recommendedName>
    <alternativeName>
        <fullName evidence="3">Inhibitor of DNA binding 2</fullName>
    </alternativeName>
    <alternativeName>
        <fullName>Inhibitor of differentiation 2</fullName>
    </alternativeName>
</protein>
<evidence type="ECO:0000250" key="1"/>
<evidence type="ECO:0000250" key="2">
    <source>
        <dbReference type="UniProtKB" id="P41136"/>
    </source>
</evidence>
<evidence type="ECO:0000250" key="3">
    <source>
        <dbReference type="UniProtKB" id="Q02363"/>
    </source>
</evidence>
<evidence type="ECO:0000255" key="4">
    <source>
        <dbReference type="PROSITE-ProRule" id="PRU00981"/>
    </source>
</evidence>
<evidence type="ECO:0000312" key="5">
    <source>
        <dbReference type="EMBL" id="AAH59758.1"/>
    </source>
</evidence>
<evidence type="ECO:0000312" key="6">
    <source>
        <dbReference type="EMBL" id="AAY99629.1"/>
    </source>
</evidence>
<evidence type="ECO:0000312" key="7">
    <source>
        <dbReference type="EMBL" id="CAJ83121.1"/>
    </source>
</evidence>
<name>ID2_XENTR</name>
<reference evidence="6" key="1">
    <citation type="submission" date="2005-07" db="EMBL/GenBank/DDBJ databases">
        <title>Sequence of Xenopus tropicalis development genes.</title>
        <authorList>
            <person name="Qin S."/>
            <person name="Dors M."/>
            <person name="Johnson E."/>
            <person name="Bloom S."/>
            <person name="Hood L."/>
            <person name="Rowen L."/>
        </authorList>
    </citation>
    <scope>NUCLEOTIDE SEQUENCE [GENOMIC DNA]</scope>
</reference>
<reference evidence="6" key="2">
    <citation type="submission" date="2006-10" db="EMBL/GenBank/DDBJ databases">
        <authorList>
            <consortium name="Sanger Xenopus tropicalis EST/cDNA project"/>
        </authorList>
    </citation>
    <scope>NUCLEOTIDE SEQUENCE [LARGE SCALE MRNA]</scope>
    <source>
        <tissue evidence="7">Tadpole</tissue>
    </source>
</reference>
<reference evidence="6" key="3">
    <citation type="submission" date="2003-10" db="EMBL/GenBank/DDBJ databases">
        <authorList>
            <consortium name="NIH - Xenopus Gene Collection (XGC) project"/>
        </authorList>
    </citation>
    <scope>NUCLEOTIDE SEQUENCE [LARGE SCALE MRNA]</scope>
    <source>
        <tissue evidence="5">Neurula</tissue>
    </source>
</reference>
<comment type="function">
    <text evidence="1">Transcriptional regulator (lacking a basic DNA binding domain) which negatively regulates the basic helix-loop-helix (bHLH) transcription factors by forming heterodimers and inhibiting their DNA binding and transcriptional activity. Inhibits the activity of both neurogenic (neurod1/neuroD) and myogenic (myod1/myoD) bHLH factors. May play a role in the regulation of the circadian clock (By similarity).</text>
</comment>
<comment type="subunit">
    <text evidence="3">Heterodimer with other HLH proteins.</text>
</comment>
<comment type="subcellular location">
    <subcellularLocation>
        <location evidence="2">Cytoplasm</location>
    </subcellularLocation>
    <subcellularLocation>
        <location evidence="2">Nucleus</location>
    </subcellularLocation>
</comment>
<proteinExistence type="evidence at transcript level"/>
<gene>
    <name evidence="5" type="primary">id2</name>
    <name type="ORF">TTpA010o03.1</name>
</gene>